<name>KAX6L_UROYA</name>
<proteinExistence type="evidence at protein level"/>
<comment type="function">
    <text evidence="1 2">Reversible blocker of voltage-gated potassium channels with fast binding and unbinding kinetics (PubMed:24723491, PubMed:31881193). Has highest activity on human voltage-gated potassium channel Kv1.2/KCNA2 channels (IC(50)=0.11-0.16 nM), whereas its affinity for other channels tested was in the nanomolar range (hKv1.1/KCNA1, IC(50)=253 nM; hKv1.3/KCNA3, IC(50)=91 nM; and hKCa3.1/KCNN4, IC(50)=70 nM) (PubMed:24723491, PubMed:31881193).</text>
</comment>
<comment type="subcellular location">
    <subcellularLocation>
        <location evidence="1">Secreted</location>
    </subcellularLocation>
</comment>
<comment type="tissue specificity">
    <text evidence="6">Expressed by the venom gland.</text>
</comment>
<comment type="domain">
    <text evidence="5">Has the structural arrangement of an alpha-helix connected to antiparallel beta-sheets by disulfide bonds (CS-alpha/beta).</text>
</comment>
<comment type="PTM">
    <text evidence="2">C-terminal amidation is important for activity. There is a 50-70-fold decrease in ability to inhibit Kv1.2/KCNA2 when the toxin is not amidated. This decrease may be explained by a 23-fold slower association rate (k(on)) together with a 2-fold faster dissociation rate (k(off)).</text>
</comment>
<comment type="mass spectrometry"/>
<comment type="miscellaneous">
    <text evidence="6">Negative results: has no effect on hKv1.4/KCNA4, hKv1.5/KCNA5, ether-a-go-go-related gene type 1 (hERG1), and ether-a-go-go-like (hELK2) channels.</text>
</comment>
<comment type="similarity">
    <text evidence="5">Belongs to the short scorpion toxin superfamily. Potassium channel inhibitor family. Alpha-KTx 06 subfamily.</text>
</comment>
<feature type="signal peptide" evidence="1">
    <location>
        <begin position="1"/>
        <end position="24"/>
    </location>
</feature>
<feature type="peptide" id="PRO_0000430422" description="Potassium channel toxin alpha-KTx 6.21" evidence="1">
    <location>
        <begin position="25"/>
        <end position="61"/>
    </location>
</feature>
<feature type="site" description="Pharmacophore, responsible of Kv1 potassium channel pore occlusion" evidence="2">
    <location>
        <position position="49"/>
    </location>
</feature>
<feature type="modified residue" description="Valine amide" evidence="1">
    <location>
        <position position="61"/>
    </location>
</feature>
<feature type="disulfide bond" evidence="2 7">
    <location>
        <begin position="29"/>
        <end position="50"/>
    </location>
</feature>
<feature type="disulfide bond" evidence="2 7">
    <location>
        <begin position="35"/>
        <end position="55"/>
    </location>
</feature>
<feature type="disulfide bond" evidence="2 7">
    <location>
        <begin position="39"/>
        <end position="57"/>
    </location>
</feature>
<feature type="disulfide bond" evidence="2 7">
    <location>
        <begin position="45"/>
        <end position="60"/>
    </location>
</feature>
<feature type="mutagenesis site" description="30-fold decrease in ability to inhibit Kv1.1/KCNA1, and no change in ability to inhibit both Kv1.2/KCNA2 and Kv1.3/KCNA3 potassium channels." evidence="2">
    <original>T</original>
    <variation>Q</variation>
    <location>
        <position position="43"/>
    </location>
</feature>
<feature type="mutagenesis site" description="Very important decrease in ability to inhibit Kv1.2/KCNA2 potassium channel, and important decrease in ability to inhibit both Kv1.1/KCNA1 and Kv1.3/KCNA3 potassium channels." evidence="2">
    <original>K</original>
    <variation>A</variation>
    <location>
        <position position="49"/>
    </location>
</feature>
<feature type="strand" evidence="8">
    <location>
        <begin position="30"/>
        <end position="32"/>
    </location>
</feature>
<feature type="helix" evidence="8">
    <location>
        <begin position="33"/>
        <end position="42"/>
    </location>
</feature>
<feature type="strand" evidence="8">
    <location>
        <begin position="48"/>
        <end position="51"/>
    </location>
</feature>
<feature type="strand" evidence="8">
    <location>
        <begin position="54"/>
        <end position="57"/>
    </location>
</feature>
<accession>P0DL37</accession>
<accession>A0A0A0PP69</accession>
<organism>
    <name type="scientific">Urodacus yaschenkoi</name>
    <name type="common">Inland robust scorpion</name>
    <dbReference type="NCBI Taxonomy" id="1273102"/>
    <lineage>
        <taxon>Eukaryota</taxon>
        <taxon>Metazoa</taxon>
        <taxon>Ecdysozoa</taxon>
        <taxon>Arthropoda</taxon>
        <taxon>Chelicerata</taxon>
        <taxon>Arachnida</taxon>
        <taxon>Scorpiones</taxon>
        <taxon>Iurida</taxon>
        <taxon>Scorpionoidea</taxon>
        <taxon>Scorpionidae</taxon>
        <taxon>Urodacinae</taxon>
        <taxon>Urodacus</taxon>
    </lineage>
</organism>
<reference key="1">
    <citation type="journal article" date="2014" name="Mol. Pharmacol.">
        <title>Structure, molecular modeling, and function of the novel potassium channel blocker urotoxin isolated from the venom of the Australian scorpion Urodacus yaschenkoi.</title>
        <authorList>
            <person name="Luna-Ramirez K."/>
            <person name="Bartok A."/>
            <person name="Restano-Cassulini R."/>
            <person name="Quintero-Hernandez V."/>
            <person name="Coronas F.I.V."/>
            <person name="Christensen J."/>
            <person name="Wright C.E."/>
            <person name="Panyi G."/>
            <person name="Possani L.D."/>
        </authorList>
    </citation>
    <scope>NUCLEOTIDE SEQUENCE [MRNA]</scope>
    <scope>PROTEIN SEQUENCE OF 25-43</scope>
    <scope>FUNCTION</scope>
    <scope>MASS SPECTROMETRY</scope>
    <scope>AMIDATION AT VAL-61</scope>
    <scope>3D-STRUCTURE MODELING IN INTERACTION WITH KV1.1/KCNA1 AND KV1.2/KCNA2</scope>
    <scope>MOLECULAR DYNAMICS SIMULATIONS</scope>
    <scope>SUBCELLULAR LOCATION</scope>
    <source>
        <tissue>Venom</tissue>
        <tissue>Venom gland</tissue>
    </source>
</reference>
<reference key="2">
    <citation type="journal article" date="2020" name="Biochem. Pharmacol.">
        <title>Structural basis of the potency and selectivity of Urotoxin, a potent Kv1 blocker from scorpion venom.</title>
        <authorList>
            <person name="Luna-Ramirez K."/>
            <person name="Csoti A."/>
            <person name="McArthur J.R."/>
            <person name="Chin Y.K.Y."/>
            <person name="Anangi R."/>
            <person name="Najera R.D.C."/>
            <person name="Possani L.D."/>
            <person name="King G.F."/>
            <person name="Panyi G."/>
            <person name="Yu H."/>
            <person name="Adams D.J."/>
            <person name="Finol-Urdaneta R.K."/>
        </authorList>
    </citation>
    <scope>STRUCTURE BY NMR OF 25-61</scope>
    <scope>FUNCTION</scope>
    <scope>DISULFIDE BONDS</scope>
    <scope>RECOMBINANT EXPRESSION</scope>
    <scope>MUTAGENESIS OF THR-43 AND LYS-49</scope>
</reference>
<keyword id="KW-0002">3D-structure</keyword>
<keyword id="KW-0027">Amidation</keyword>
<keyword id="KW-0903">Direct protein sequencing</keyword>
<keyword id="KW-1015">Disulfide bond</keyword>
<keyword id="KW-0872">Ion channel impairing toxin</keyword>
<keyword id="KW-0528">Neurotoxin</keyword>
<keyword id="KW-0632">Potassium channel impairing toxin</keyword>
<keyword id="KW-0964">Secreted</keyword>
<keyword id="KW-0732">Signal</keyword>
<keyword id="KW-0800">Toxin</keyword>
<protein>
    <recommendedName>
        <fullName evidence="3">Potassium channel toxin alpha-KTx 6.21</fullName>
    </recommendedName>
    <alternativeName>
        <fullName evidence="3 4">Urotoxin</fullName>
        <shortName evidence="4">Uro</shortName>
    </alternativeName>
</protein>
<dbReference type="EMBL" id="KC818423">
    <property type="protein sequence ID" value="AHJ59315.1"/>
    <property type="molecule type" value="mRNA"/>
</dbReference>
<dbReference type="PDB" id="6MZT">
    <property type="method" value="NMR"/>
    <property type="chains" value="A=25-61"/>
</dbReference>
<dbReference type="PDBsum" id="6MZT"/>
<dbReference type="SMR" id="P0DL37"/>
<dbReference type="TCDB" id="8.B.8.1.7">
    <property type="family name" value="the Alpha-ktx15 scorpion toxin (Alpha-ktx15) family"/>
</dbReference>
<dbReference type="GO" id="GO:0005576">
    <property type="term" value="C:extracellular region"/>
    <property type="evidence" value="ECO:0007669"/>
    <property type="project" value="UniProtKB-SubCell"/>
</dbReference>
<dbReference type="GO" id="GO:0008200">
    <property type="term" value="F:ion channel inhibitor activity"/>
    <property type="evidence" value="ECO:0007669"/>
    <property type="project" value="InterPro"/>
</dbReference>
<dbReference type="GO" id="GO:0015459">
    <property type="term" value="F:potassium channel regulator activity"/>
    <property type="evidence" value="ECO:0007669"/>
    <property type="project" value="UniProtKB-KW"/>
</dbReference>
<dbReference type="GO" id="GO:0090729">
    <property type="term" value="F:toxin activity"/>
    <property type="evidence" value="ECO:0007669"/>
    <property type="project" value="UniProtKB-KW"/>
</dbReference>
<dbReference type="Gene3D" id="3.30.30.10">
    <property type="entry name" value="Knottin, scorpion toxin-like"/>
    <property type="match status" value="1"/>
</dbReference>
<dbReference type="InterPro" id="IPR036574">
    <property type="entry name" value="Scorpion_toxin-like_sf"/>
</dbReference>
<dbReference type="InterPro" id="IPR001947">
    <property type="entry name" value="Scorpion_toxinS_K_inh"/>
</dbReference>
<dbReference type="Pfam" id="PF00451">
    <property type="entry name" value="Toxin_2"/>
    <property type="match status" value="1"/>
</dbReference>
<dbReference type="PRINTS" id="PR00286">
    <property type="entry name" value="CHARYBDTOXIN"/>
</dbReference>
<dbReference type="SUPFAM" id="SSF57095">
    <property type="entry name" value="Scorpion toxin-like"/>
    <property type="match status" value="1"/>
</dbReference>
<dbReference type="PROSITE" id="PS01138">
    <property type="entry name" value="SCORP_SHORT_TOXIN"/>
    <property type="match status" value="1"/>
</dbReference>
<evidence type="ECO:0000269" key="1">
    <source>
    </source>
</evidence>
<evidence type="ECO:0000269" key="2">
    <source>
    </source>
</evidence>
<evidence type="ECO:0000303" key="3">
    <source>
    </source>
</evidence>
<evidence type="ECO:0000303" key="4">
    <source>
    </source>
</evidence>
<evidence type="ECO:0000305" key="5"/>
<evidence type="ECO:0000305" key="6">
    <source>
    </source>
</evidence>
<evidence type="ECO:0007744" key="7">
    <source>
        <dbReference type="PDB" id="6MZT"/>
    </source>
</evidence>
<evidence type="ECO:0007829" key="8">
    <source>
        <dbReference type="PDB" id="6MZT"/>
    </source>
</evidence>
<sequence>MNAKLIYLLLVVTTMMLTFDTTQAGDIKCSGTRQCWGPCKKQTTCTNSKCMNGKCKCYGCVG</sequence>